<accession>A9MJR3</accession>
<name>ATP6_SALAR</name>
<gene>
    <name evidence="1" type="primary">atpB</name>
    <name type="ordered locus">SARI_03780</name>
</gene>
<feature type="chain" id="PRO_0000362433" description="ATP synthase subunit a">
    <location>
        <begin position="1"/>
        <end position="271"/>
    </location>
</feature>
<feature type="transmembrane region" description="Helical" evidence="1">
    <location>
        <begin position="38"/>
        <end position="58"/>
    </location>
</feature>
<feature type="transmembrane region" description="Helical" evidence="1">
    <location>
        <begin position="100"/>
        <end position="120"/>
    </location>
</feature>
<feature type="transmembrane region" description="Helical" evidence="1">
    <location>
        <begin position="146"/>
        <end position="166"/>
    </location>
</feature>
<feature type="transmembrane region" description="Helical" evidence="1">
    <location>
        <begin position="220"/>
        <end position="240"/>
    </location>
</feature>
<feature type="transmembrane region" description="Helical" evidence="1">
    <location>
        <begin position="242"/>
        <end position="262"/>
    </location>
</feature>
<organism>
    <name type="scientific">Salmonella arizonae (strain ATCC BAA-731 / CDC346-86 / RSK2980)</name>
    <dbReference type="NCBI Taxonomy" id="41514"/>
    <lineage>
        <taxon>Bacteria</taxon>
        <taxon>Pseudomonadati</taxon>
        <taxon>Pseudomonadota</taxon>
        <taxon>Gammaproteobacteria</taxon>
        <taxon>Enterobacterales</taxon>
        <taxon>Enterobacteriaceae</taxon>
        <taxon>Salmonella</taxon>
    </lineage>
</organism>
<keyword id="KW-0066">ATP synthesis</keyword>
<keyword id="KW-0997">Cell inner membrane</keyword>
<keyword id="KW-1003">Cell membrane</keyword>
<keyword id="KW-0138">CF(0)</keyword>
<keyword id="KW-0375">Hydrogen ion transport</keyword>
<keyword id="KW-0406">Ion transport</keyword>
<keyword id="KW-0472">Membrane</keyword>
<keyword id="KW-1185">Reference proteome</keyword>
<keyword id="KW-0812">Transmembrane</keyword>
<keyword id="KW-1133">Transmembrane helix</keyword>
<keyword id="KW-0813">Transport</keyword>
<proteinExistence type="inferred from homology"/>
<sequence length="271" mass="30430">MASENMTPQDYIGHHLNNLQMDLRTFSLVDPHNPPATFWTLNIDSMFFSVVLGLLFLVMFRSVAKKATSGVPGKFQTAIELIVGFVHGSVKDMYHGKSKLIAPLALTIFVWVFLMNLMDLLPIDLLPYIAEHWLGLPATRVVPSADVNITLSMALGVFILILFYSIKMKGIGGFAKELTLQPFNHWAFIPVNLILEGVSLLSKPVSLGLRLFGNMYAGELIFILIAGLLPWWSQWILNVPWAIFHILIITLQAFIFMVLTIVYLSMASEEH</sequence>
<reference key="1">
    <citation type="submission" date="2007-11" db="EMBL/GenBank/DDBJ databases">
        <authorList>
            <consortium name="The Salmonella enterica serovar Arizonae Genome Sequencing Project"/>
            <person name="McClelland M."/>
            <person name="Sanderson E.K."/>
            <person name="Porwollik S."/>
            <person name="Spieth J."/>
            <person name="Clifton W.S."/>
            <person name="Fulton R."/>
            <person name="Chunyan W."/>
            <person name="Wollam A."/>
            <person name="Shah N."/>
            <person name="Pepin K."/>
            <person name="Bhonagiri V."/>
            <person name="Nash W."/>
            <person name="Johnson M."/>
            <person name="Thiruvilangam P."/>
            <person name="Wilson R."/>
        </authorList>
    </citation>
    <scope>NUCLEOTIDE SEQUENCE [LARGE SCALE GENOMIC DNA]</scope>
    <source>
        <strain>ATCC BAA-731 / CDC346-86 / RSK2980</strain>
    </source>
</reference>
<dbReference type="EMBL" id="CP000880">
    <property type="protein sequence ID" value="ABX23574.1"/>
    <property type="molecule type" value="Genomic_DNA"/>
</dbReference>
<dbReference type="SMR" id="A9MJR3"/>
<dbReference type="STRING" id="41514.SARI_03780"/>
<dbReference type="KEGG" id="ses:SARI_03780"/>
<dbReference type="HOGENOM" id="CLU_041018_1_0_6"/>
<dbReference type="Proteomes" id="UP000002084">
    <property type="component" value="Chromosome"/>
</dbReference>
<dbReference type="GO" id="GO:0005886">
    <property type="term" value="C:plasma membrane"/>
    <property type="evidence" value="ECO:0007669"/>
    <property type="project" value="UniProtKB-SubCell"/>
</dbReference>
<dbReference type="GO" id="GO:0045259">
    <property type="term" value="C:proton-transporting ATP synthase complex"/>
    <property type="evidence" value="ECO:0007669"/>
    <property type="project" value="UniProtKB-KW"/>
</dbReference>
<dbReference type="GO" id="GO:0046933">
    <property type="term" value="F:proton-transporting ATP synthase activity, rotational mechanism"/>
    <property type="evidence" value="ECO:0007669"/>
    <property type="project" value="UniProtKB-UniRule"/>
</dbReference>
<dbReference type="GO" id="GO:0042777">
    <property type="term" value="P:proton motive force-driven plasma membrane ATP synthesis"/>
    <property type="evidence" value="ECO:0007669"/>
    <property type="project" value="TreeGrafter"/>
</dbReference>
<dbReference type="CDD" id="cd00310">
    <property type="entry name" value="ATP-synt_Fo_a_6"/>
    <property type="match status" value="1"/>
</dbReference>
<dbReference type="FunFam" id="1.20.120.220:FF:000002">
    <property type="entry name" value="ATP synthase subunit a"/>
    <property type="match status" value="1"/>
</dbReference>
<dbReference type="Gene3D" id="1.20.120.220">
    <property type="entry name" value="ATP synthase, F0 complex, subunit A"/>
    <property type="match status" value="1"/>
</dbReference>
<dbReference type="HAMAP" id="MF_01393">
    <property type="entry name" value="ATP_synth_a_bact"/>
    <property type="match status" value="1"/>
</dbReference>
<dbReference type="InterPro" id="IPR045082">
    <property type="entry name" value="ATP_syn_F0_a_bact/chloroplast"/>
</dbReference>
<dbReference type="InterPro" id="IPR000568">
    <property type="entry name" value="ATP_synth_F0_asu"/>
</dbReference>
<dbReference type="InterPro" id="IPR023011">
    <property type="entry name" value="ATP_synth_F0_asu_AS"/>
</dbReference>
<dbReference type="InterPro" id="IPR035908">
    <property type="entry name" value="F0_ATP_A_sf"/>
</dbReference>
<dbReference type="NCBIfam" id="TIGR01131">
    <property type="entry name" value="ATP_synt_6_or_A"/>
    <property type="match status" value="1"/>
</dbReference>
<dbReference type="NCBIfam" id="NF004477">
    <property type="entry name" value="PRK05815.1-1"/>
    <property type="match status" value="1"/>
</dbReference>
<dbReference type="PANTHER" id="PTHR42823">
    <property type="entry name" value="ATP SYNTHASE SUBUNIT A, CHLOROPLASTIC"/>
    <property type="match status" value="1"/>
</dbReference>
<dbReference type="PANTHER" id="PTHR42823:SF3">
    <property type="entry name" value="ATP SYNTHASE SUBUNIT A, CHLOROPLASTIC"/>
    <property type="match status" value="1"/>
</dbReference>
<dbReference type="Pfam" id="PF00119">
    <property type="entry name" value="ATP-synt_A"/>
    <property type="match status" value="1"/>
</dbReference>
<dbReference type="PRINTS" id="PR00123">
    <property type="entry name" value="ATPASEA"/>
</dbReference>
<dbReference type="SUPFAM" id="SSF81336">
    <property type="entry name" value="F1F0 ATP synthase subunit A"/>
    <property type="match status" value="1"/>
</dbReference>
<dbReference type="PROSITE" id="PS00449">
    <property type="entry name" value="ATPASE_A"/>
    <property type="match status" value="1"/>
</dbReference>
<protein>
    <recommendedName>
        <fullName evidence="1">ATP synthase subunit a</fullName>
    </recommendedName>
    <alternativeName>
        <fullName evidence="1">ATP synthase F0 sector subunit a</fullName>
    </alternativeName>
    <alternativeName>
        <fullName evidence="1">F-ATPase subunit 6</fullName>
    </alternativeName>
</protein>
<comment type="function">
    <text evidence="1">Key component of the proton channel; it plays a direct role in the translocation of protons across the membrane.</text>
</comment>
<comment type="subunit">
    <text evidence="1">F-type ATPases have 2 components, CF(1) - the catalytic core - and CF(0) - the membrane proton channel. CF(1) has five subunits: alpha(3), beta(3), gamma(1), delta(1), epsilon(1). CF(0) has three main subunits: a(1), b(2) and c(9-12). The alpha and beta chains form an alternating ring which encloses part of the gamma chain. CF(1) is attached to CF(0) by a central stalk formed by the gamma and epsilon chains, while a peripheral stalk is formed by the delta and b chains.</text>
</comment>
<comment type="subcellular location">
    <subcellularLocation>
        <location evidence="1">Cell inner membrane</location>
        <topology evidence="1">Multi-pass membrane protein</topology>
    </subcellularLocation>
</comment>
<comment type="similarity">
    <text evidence="1">Belongs to the ATPase A chain family.</text>
</comment>
<evidence type="ECO:0000255" key="1">
    <source>
        <dbReference type="HAMAP-Rule" id="MF_01393"/>
    </source>
</evidence>